<accession>Q46C74</accession>
<dbReference type="EC" id="2.7.7.-" evidence="1"/>
<dbReference type="EMBL" id="CP000099">
    <property type="protein sequence ID" value="AAZ70518.1"/>
    <property type="molecule type" value="Genomic_DNA"/>
</dbReference>
<dbReference type="SMR" id="Q46C74"/>
<dbReference type="STRING" id="269797.Mbar_A1571"/>
<dbReference type="PaxDb" id="269797-Mbar_A1571"/>
<dbReference type="KEGG" id="mba:Mbar_A1571"/>
<dbReference type="eggNOG" id="arCOG04110">
    <property type="taxonomic scope" value="Archaea"/>
</dbReference>
<dbReference type="HOGENOM" id="CLU_056123_1_0_2"/>
<dbReference type="OrthoDB" id="31125at2157"/>
<dbReference type="GO" id="GO:0000428">
    <property type="term" value="C:DNA-directed RNA polymerase complex"/>
    <property type="evidence" value="ECO:0007669"/>
    <property type="project" value="UniProtKB-KW"/>
</dbReference>
<dbReference type="GO" id="GO:1990077">
    <property type="term" value="C:primosome complex"/>
    <property type="evidence" value="ECO:0007669"/>
    <property type="project" value="UniProtKB-KW"/>
</dbReference>
<dbReference type="GO" id="GO:0003899">
    <property type="term" value="F:DNA-directed RNA polymerase activity"/>
    <property type="evidence" value="ECO:0007669"/>
    <property type="project" value="InterPro"/>
</dbReference>
<dbReference type="GO" id="GO:0046872">
    <property type="term" value="F:metal ion binding"/>
    <property type="evidence" value="ECO:0007669"/>
    <property type="project" value="UniProtKB-KW"/>
</dbReference>
<dbReference type="GO" id="GO:0006269">
    <property type="term" value="P:DNA replication, synthesis of primer"/>
    <property type="evidence" value="ECO:0007669"/>
    <property type="project" value="UniProtKB-UniRule"/>
</dbReference>
<dbReference type="CDD" id="cd04860">
    <property type="entry name" value="AE_Prim_S"/>
    <property type="match status" value="1"/>
</dbReference>
<dbReference type="Gene3D" id="3.90.920.10">
    <property type="entry name" value="DNA primase, PRIM domain"/>
    <property type="match status" value="1"/>
</dbReference>
<dbReference type="HAMAP" id="MF_00700">
    <property type="entry name" value="DNA_primase_sml_arc"/>
    <property type="match status" value="1"/>
</dbReference>
<dbReference type="InterPro" id="IPR002755">
    <property type="entry name" value="DNA_primase_S"/>
</dbReference>
<dbReference type="InterPro" id="IPR014052">
    <property type="entry name" value="DNA_primase_ssu_euk/arc"/>
</dbReference>
<dbReference type="InterPro" id="IPR023639">
    <property type="entry name" value="DNA_primase_ssu_PriS"/>
</dbReference>
<dbReference type="NCBIfam" id="TIGR00335">
    <property type="entry name" value="primase_sml"/>
    <property type="match status" value="1"/>
</dbReference>
<dbReference type="PANTHER" id="PTHR10536">
    <property type="entry name" value="DNA PRIMASE SMALL SUBUNIT"/>
    <property type="match status" value="1"/>
</dbReference>
<dbReference type="Pfam" id="PF01896">
    <property type="entry name" value="DNA_primase_S"/>
    <property type="match status" value="1"/>
</dbReference>
<dbReference type="SUPFAM" id="SSF56747">
    <property type="entry name" value="Prim-pol domain"/>
    <property type="match status" value="1"/>
</dbReference>
<organism>
    <name type="scientific">Methanosarcina barkeri (strain Fusaro / DSM 804)</name>
    <dbReference type="NCBI Taxonomy" id="269797"/>
    <lineage>
        <taxon>Archaea</taxon>
        <taxon>Methanobacteriati</taxon>
        <taxon>Methanobacteriota</taxon>
        <taxon>Stenosarchaea group</taxon>
        <taxon>Methanomicrobia</taxon>
        <taxon>Methanosarcinales</taxon>
        <taxon>Methanosarcinaceae</taxon>
        <taxon>Methanosarcina</taxon>
    </lineage>
</organism>
<sequence length="414" mass="47714">MDNRTARFLKTRFQKYYKNAEIGLPDHLPNREWAFIFFDSMPDKMMHRHKAFGSPGEALDYLYGMAPAHVYNSTAYYEYPDARKMNEKNWLGAELIFDLDADHLPDAPKNYADMLELVKKETFKLMDFLLEDFGFSEQEIELVFSGGRGYHFHVRSPKVLKLGSAERREIVNYLSGRDLDFKYFFREVAMDGEFGTGSKTFKGMKNVPFKCTLVGYDSGWGRRIALYLTDYMKAECGKRYKKDMFPELRRYEKVGDTTIKKLISLTNSENGLKDILEKGRLDFDVRNFKDIAAYFMRESVEDFLHRFGTSVDEPVTADIKRLIRVPGSLHGGSGMLVKKLALSELEKFDPLTDAVVFGERPVKVTVLKPFSVQLKGKDLRVEEGIQEVPEYAAVYLICRGVAEYGHRRNQPGPV</sequence>
<comment type="function">
    <text evidence="1">Catalytic subunit of DNA primase, an RNA polymerase that catalyzes the synthesis of short RNA molecules used as primers for DNA polymerase during DNA replication. The small subunit contains the primase catalytic core and has DNA synthesis activity on its own. Binding to the large subunit stabilizes and modulates the activity, increasing the rate of DNA synthesis while decreasing the length of the DNA fragments, and conferring RNA synthesis capability. The DNA polymerase activity may enable DNA primase to also catalyze primer extension after primer synthesis. May also play a role in DNA repair.</text>
</comment>
<comment type="cofactor">
    <cofactor evidence="1">
        <name>Mg(2+)</name>
        <dbReference type="ChEBI" id="CHEBI:18420"/>
    </cofactor>
    <cofactor evidence="1">
        <name>Mn(2+)</name>
        <dbReference type="ChEBI" id="CHEBI:29035"/>
    </cofactor>
</comment>
<comment type="subunit">
    <text evidence="1">Heterodimer of a small subunit (PriS) and a large subunit (PriL).</text>
</comment>
<comment type="similarity">
    <text evidence="1">Belongs to the eukaryotic-type primase small subunit family.</text>
</comment>
<feature type="chain" id="PRO_0000225640" description="DNA primase small subunit PriS">
    <location>
        <begin position="1"/>
        <end position="414"/>
    </location>
</feature>
<feature type="active site" evidence="1">
    <location>
        <position position="98"/>
    </location>
</feature>
<feature type="active site" evidence="1">
    <location>
        <position position="100"/>
    </location>
</feature>
<feature type="active site" evidence="1">
    <location>
        <position position="312"/>
    </location>
</feature>
<name>PRIS_METBF</name>
<keyword id="KW-0235">DNA replication</keyword>
<keyword id="KW-0240">DNA-directed RNA polymerase</keyword>
<keyword id="KW-0460">Magnesium</keyword>
<keyword id="KW-0464">Manganese</keyword>
<keyword id="KW-0479">Metal-binding</keyword>
<keyword id="KW-0548">Nucleotidyltransferase</keyword>
<keyword id="KW-0639">Primosome</keyword>
<keyword id="KW-0804">Transcription</keyword>
<keyword id="KW-0808">Transferase</keyword>
<gene>
    <name evidence="1" type="primary">priS</name>
    <name type="synonym">priA</name>
    <name type="ordered locus">Mbar_A1571</name>
</gene>
<reference key="1">
    <citation type="journal article" date="2006" name="J. Bacteriol.">
        <title>The Methanosarcina barkeri genome: comparative analysis with Methanosarcina acetivorans and Methanosarcina mazei reveals extensive rearrangement within methanosarcinal genomes.</title>
        <authorList>
            <person name="Maeder D.L."/>
            <person name="Anderson I."/>
            <person name="Brettin T.S."/>
            <person name="Bruce D.C."/>
            <person name="Gilna P."/>
            <person name="Han C.S."/>
            <person name="Lapidus A."/>
            <person name="Metcalf W.W."/>
            <person name="Saunders E."/>
            <person name="Tapia R."/>
            <person name="Sowers K.R."/>
        </authorList>
    </citation>
    <scope>NUCLEOTIDE SEQUENCE [LARGE SCALE GENOMIC DNA]</scope>
    <source>
        <strain>Fusaro / DSM 804</strain>
    </source>
</reference>
<evidence type="ECO:0000255" key="1">
    <source>
        <dbReference type="HAMAP-Rule" id="MF_00700"/>
    </source>
</evidence>
<protein>
    <recommendedName>
        <fullName evidence="1">DNA primase small subunit PriS</fullName>
        <ecNumber evidence="1">2.7.7.-</ecNumber>
    </recommendedName>
</protein>
<proteinExistence type="inferred from homology"/>